<proteinExistence type="evidence at protein level"/>
<sequence>MFATSGAVAAGKPYSCSECGKSFCYSSVLLRHERAHGGDGRFRCLECGERCARAADLRAHRRTHAGQTLYICSECGQSFRHSGRLDLHLGAHRQRCRTCPCRTCGRRFPHLPALLLHRRRQHLPERPRRCPLCARTFRQSALLFHQARAHPLGTTSDPAAPPHRCAQCPRAFRSGAGLRSHARIHVSRSPTRPRVSDAHQCGVCGKCFGKSSTLTRHLQTHSGEKPFKCPECGKGFLESATLVRHQRTHTGEKPYACGDCGRCFSESSTLLRHRRSHQGERPHACATCGKGFGQRSDLVVHQRIHTGEKPFACPECGRRFSDRSDLTKHRRTHTGEKPYRCELCGKRFTCVSNLNVHRRNHAGHKPHKCPECSKAFSVASKLALHRKTHLGERPAECAECGKCFSHSRSLSQHQRAHTRARTAAAVAIQSAVGTALVFEGPAEQEKPGFSVS</sequence>
<gene>
    <name evidence="3" type="primary">ZNF672</name>
</gene>
<keyword id="KW-0238">DNA-binding</keyword>
<keyword id="KW-0479">Metal-binding</keyword>
<keyword id="KW-0539">Nucleus</keyword>
<keyword id="KW-1267">Proteomics identification</keyword>
<keyword id="KW-1185">Reference proteome</keyword>
<keyword id="KW-0677">Repeat</keyword>
<keyword id="KW-0804">Transcription</keyword>
<keyword id="KW-0805">Transcription regulation</keyword>
<keyword id="KW-0862">Zinc</keyword>
<keyword id="KW-0863">Zinc-finger</keyword>
<organism>
    <name type="scientific">Homo sapiens</name>
    <name type="common">Human</name>
    <dbReference type="NCBI Taxonomy" id="9606"/>
    <lineage>
        <taxon>Eukaryota</taxon>
        <taxon>Metazoa</taxon>
        <taxon>Chordata</taxon>
        <taxon>Craniata</taxon>
        <taxon>Vertebrata</taxon>
        <taxon>Euteleostomi</taxon>
        <taxon>Mammalia</taxon>
        <taxon>Eutheria</taxon>
        <taxon>Euarchontoglires</taxon>
        <taxon>Primates</taxon>
        <taxon>Haplorrhini</taxon>
        <taxon>Catarrhini</taxon>
        <taxon>Hominidae</taxon>
        <taxon>Homo</taxon>
    </lineage>
</organism>
<accession>Q499Z4</accession>
<accession>Q96H65</accession>
<accession>Q96IM3</accession>
<accession>Q9H6G5</accession>
<reference key="1">
    <citation type="journal article" date="2004" name="Nat. Genet.">
        <title>Complete sequencing and characterization of 21,243 full-length human cDNAs.</title>
        <authorList>
            <person name="Ota T."/>
            <person name="Suzuki Y."/>
            <person name="Nishikawa T."/>
            <person name="Otsuki T."/>
            <person name="Sugiyama T."/>
            <person name="Irie R."/>
            <person name="Wakamatsu A."/>
            <person name="Hayashi K."/>
            <person name="Sato H."/>
            <person name="Nagai K."/>
            <person name="Kimura K."/>
            <person name="Makita H."/>
            <person name="Sekine M."/>
            <person name="Obayashi M."/>
            <person name="Nishi T."/>
            <person name="Shibahara T."/>
            <person name="Tanaka T."/>
            <person name="Ishii S."/>
            <person name="Yamamoto J."/>
            <person name="Saito K."/>
            <person name="Kawai Y."/>
            <person name="Isono Y."/>
            <person name="Nakamura Y."/>
            <person name="Nagahari K."/>
            <person name="Murakami K."/>
            <person name="Yasuda T."/>
            <person name="Iwayanagi T."/>
            <person name="Wagatsuma M."/>
            <person name="Shiratori A."/>
            <person name="Sudo H."/>
            <person name="Hosoiri T."/>
            <person name="Kaku Y."/>
            <person name="Kodaira H."/>
            <person name="Kondo H."/>
            <person name="Sugawara M."/>
            <person name="Takahashi M."/>
            <person name="Kanda K."/>
            <person name="Yokoi T."/>
            <person name="Furuya T."/>
            <person name="Kikkawa E."/>
            <person name="Omura Y."/>
            <person name="Abe K."/>
            <person name="Kamihara K."/>
            <person name="Katsuta N."/>
            <person name="Sato K."/>
            <person name="Tanikawa M."/>
            <person name="Yamazaki M."/>
            <person name="Ninomiya K."/>
            <person name="Ishibashi T."/>
            <person name="Yamashita H."/>
            <person name="Murakawa K."/>
            <person name="Fujimori K."/>
            <person name="Tanai H."/>
            <person name="Kimata M."/>
            <person name="Watanabe M."/>
            <person name="Hiraoka S."/>
            <person name="Chiba Y."/>
            <person name="Ishida S."/>
            <person name="Ono Y."/>
            <person name="Takiguchi S."/>
            <person name="Watanabe S."/>
            <person name="Yosida M."/>
            <person name="Hotuta T."/>
            <person name="Kusano J."/>
            <person name="Kanehori K."/>
            <person name="Takahashi-Fujii A."/>
            <person name="Hara H."/>
            <person name="Tanase T.-O."/>
            <person name="Nomura Y."/>
            <person name="Togiya S."/>
            <person name="Komai F."/>
            <person name="Hara R."/>
            <person name="Takeuchi K."/>
            <person name="Arita M."/>
            <person name="Imose N."/>
            <person name="Musashino K."/>
            <person name="Yuuki H."/>
            <person name="Oshima A."/>
            <person name="Sasaki N."/>
            <person name="Aotsuka S."/>
            <person name="Yoshikawa Y."/>
            <person name="Matsunawa H."/>
            <person name="Ichihara T."/>
            <person name="Shiohata N."/>
            <person name="Sano S."/>
            <person name="Moriya S."/>
            <person name="Momiyama H."/>
            <person name="Satoh N."/>
            <person name="Takami S."/>
            <person name="Terashima Y."/>
            <person name="Suzuki O."/>
            <person name="Nakagawa S."/>
            <person name="Senoh A."/>
            <person name="Mizoguchi H."/>
            <person name="Goto Y."/>
            <person name="Shimizu F."/>
            <person name="Wakebe H."/>
            <person name="Hishigaki H."/>
            <person name="Watanabe T."/>
            <person name="Sugiyama A."/>
            <person name="Takemoto M."/>
            <person name="Kawakami B."/>
            <person name="Yamazaki M."/>
            <person name="Watanabe K."/>
            <person name="Kumagai A."/>
            <person name="Itakura S."/>
            <person name="Fukuzumi Y."/>
            <person name="Fujimori Y."/>
            <person name="Komiyama M."/>
            <person name="Tashiro H."/>
            <person name="Tanigami A."/>
            <person name="Fujiwara T."/>
            <person name="Ono T."/>
            <person name="Yamada K."/>
            <person name="Fujii Y."/>
            <person name="Ozaki K."/>
            <person name="Hirao M."/>
            <person name="Ohmori Y."/>
            <person name="Kawabata A."/>
            <person name="Hikiji T."/>
            <person name="Kobatake N."/>
            <person name="Inagaki H."/>
            <person name="Ikema Y."/>
            <person name="Okamoto S."/>
            <person name="Okitani R."/>
            <person name="Kawakami T."/>
            <person name="Noguchi S."/>
            <person name="Itoh T."/>
            <person name="Shigeta K."/>
            <person name="Senba T."/>
            <person name="Matsumura K."/>
            <person name="Nakajima Y."/>
            <person name="Mizuno T."/>
            <person name="Morinaga M."/>
            <person name="Sasaki M."/>
            <person name="Togashi T."/>
            <person name="Oyama M."/>
            <person name="Hata H."/>
            <person name="Watanabe M."/>
            <person name="Komatsu T."/>
            <person name="Mizushima-Sugano J."/>
            <person name="Satoh T."/>
            <person name="Shirai Y."/>
            <person name="Takahashi Y."/>
            <person name="Nakagawa K."/>
            <person name="Okumura K."/>
            <person name="Nagase T."/>
            <person name="Nomura N."/>
            <person name="Kikuchi H."/>
            <person name="Masuho Y."/>
            <person name="Yamashita R."/>
            <person name="Nakai K."/>
            <person name="Yada T."/>
            <person name="Nakamura Y."/>
            <person name="Ohara O."/>
            <person name="Isogai T."/>
            <person name="Sugano S."/>
        </authorList>
    </citation>
    <scope>NUCLEOTIDE SEQUENCE [LARGE SCALE MRNA]</scope>
    <source>
        <tissue>Epithelium</tissue>
        <tissue>Teratocarcinoma</tissue>
    </source>
</reference>
<reference key="2">
    <citation type="journal article" date="2004" name="Genome Res.">
        <title>The status, quality, and expansion of the NIH full-length cDNA project: the Mammalian Gene Collection (MGC).</title>
        <authorList>
            <consortium name="The MGC Project Team"/>
        </authorList>
    </citation>
    <scope>NUCLEOTIDE SEQUENCE [LARGE SCALE MRNA]</scope>
    <source>
        <tissue>Brain</tissue>
        <tissue>Lymph</tissue>
        <tissue>Testis</tissue>
    </source>
</reference>
<dbReference type="EMBL" id="AK025954">
    <property type="protein sequence ID" value="BAB15294.1"/>
    <property type="molecule type" value="mRNA"/>
</dbReference>
<dbReference type="EMBL" id="AK027679">
    <property type="protein sequence ID" value="BAB55290.1"/>
    <property type="molecule type" value="mRNA"/>
</dbReference>
<dbReference type="EMBL" id="BC007385">
    <property type="protein sequence ID" value="AAH07385.2"/>
    <property type="molecule type" value="mRNA"/>
</dbReference>
<dbReference type="EMBL" id="BC008872">
    <property type="protein sequence ID" value="AAH08872.1"/>
    <property type="status" value="ALT_SEQ"/>
    <property type="molecule type" value="mRNA"/>
</dbReference>
<dbReference type="EMBL" id="BC035140">
    <property type="protein sequence ID" value="AAH35140.1"/>
    <property type="molecule type" value="mRNA"/>
</dbReference>
<dbReference type="EMBL" id="BC050348">
    <property type="protein sequence ID" value="AAH50348.1"/>
    <property type="molecule type" value="mRNA"/>
</dbReference>
<dbReference type="EMBL" id="BC068506">
    <property type="protein sequence ID" value="AAH68506.1"/>
    <property type="molecule type" value="mRNA"/>
</dbReference>
<dbReference type="CCDS" id="CCDS1638.1"/>
<dbReference type="RefSeq" id="NP_079112.1">
    <property type="nucleotide sequence ID" value="NM_024836.3"/>
</dbReference>
<dbReference type="RefSeq" id="XP_005270393.1">
    <property type="nucleotide sequence ID" value="XM_005270336.3"/>
</dbReference>
<dbReference type="RefSeq" id="XP_047286779.1">
    <property type="nucleotide sequence ID" value="XM_047430823.1"/>
</dbReference>
<dbReference type="RefSeq" id="XP_054194777.1">
    <property type="nucleotide sequence ID" value="XM_054338802.1"/>
</dbReference>
<dbReference type="RefSeq" id="XP_054194778.1">
    <property type="nucleotide sequence ID" value="XM_054338803.1"/>
</dbReference>
<dbReference type="SMR" id="Q499Z4"/>
<dbReference type="BioGRID" id="122978">
    <property type="interactions" value="13"/>
</dbReference>
<dbReference type="FunCoup" id="Q499Z4">
    <property type="interactions" value="159"/>
</dbReference>
<dbReference type="IntAct" id="Q499Z4">
    <property type="interactions" value="6"/>
</dbReference>
<dbReference type="STRING" id="9606.ENSP00000421915"/>
<dbReference type="iPTMnet" id="Q499Z4"/>
<dbReference type="PhosphoSitePlus" id="Q499Z4"/>
<dbReference type="BioMuta" id="ZNF672"/>
<dbReference type="DMDM" id="116242864"/>
<dbReference type="jPOST" id="Q499Z4"/>
<dbReference type="MassIVE" id="Q499Z4"/>
<dbReference type="PaxDb" id="9606-ENSP00000421915"/>
<dbReference type="PeptideAtlas" id="Q499Z4"/>
<dbReference type="Pumba" id="Q499Z4"/>
<dbReference type="Antibodypedia" id="34768">
    <property type="antibodies" value="117 antibodies from 19 providers"/>
</dbReference>
<dbReference type="DNASU" id="79894"/>
<dbReference type="Ensembl" id="ENST00000306562.8">
    <property type="protein sequence ID" value="ENSP00000421915.1"/>
    <property type="gene ID" value="ENSG00000171161.13"/>
</dbReference>
<dbReference type="GeneID" id="79894"/>
<dbReference type="KEGG" id="hsa:79894"/>
<dbReference type="MANE-Select" id="ENST00000306562.8">
    <property type="protein sequence ID" value="ENSP00000421915.1"/>
    <property type="RefSeq nucleotide sequence ID" value="NM_024836.3"/>
    <property type="RefSeq protein sequence ID" value="NP_079112.1"/>
</dbReference>
<dbReference type="UCSC" id="uc001iex.4">
    <property type="organism name" value="human"/>
</dbReference>
<dbReference type="AGR" id="HGNC:26179"/>
<dbReference type="CTD" id="79894"/>
<dbReference type="GeneCards" id="ZNF672"/>
<dbReference type="HGNC" id="HGNC:26179">
    <property type="gene designation" value="ZNF672"/>
</dbReference>
<dbReference type="HPA" id="ENSG00000171161">
    <property type="expression patterns" value="Low tissue specificity"/>
</dbReference>
<dbReference type="neXtProt" id="NX_Q499Z4"/>
<dbReference type="OpenTargets" id="ENSG00000171161"/>
<dbReference type="PharmGKB" id="PA142670473"/>
<dbReference type="VEuPathDB" id="HostDB:ENSG00000171161"/>
<dbReference type="eggNOG" id="KOG1721">
    <property type="taxonomic scope" value="Eukaryota"/>
</dbReference>
<dbReference type="GeneTree" id="ENSGT01130000278280"/>
<dbReference type="HOGENOM" id="CLU_002678_44_0_1"/>
<dbReference type="InParanoid" id="Q499Z4"/>
<dbReference type="OMA" id="CPCRTCG"/>
<dbReference type="OrthoDB" id="1095242at2759"/>
<dbReference type="PAN-GO" id="Q499Z4">
    <property type="GO annotations" value="4 GO annotations based on evolutionary models"/>
</dbReference>
<dbReference type="PhylomeDB" id="Q499Z4"/>
<dbReference type="TreeFam" id="TF337999"/>
<dbReference type="PathwayCommons" id="Q499Z4"/>
<dbReference type="SignaLink" id="Q499Z4"/>
<dbReference type="BioGRID-ORCS" id="79894">
    <property type="hits" value="10 hits in 1180 CRISPR screens"/>
</dbReference>
<dbReference type="ChiTaRS" id="ZNF672">
    <property type="organism name" value="human"/>
</dbReference>
<dbReference type="GenomeRNAi" id="79894"/>
<dbReference type="Pharos" id="Q499Z4">
    <property type="development level" value="Tdark"/>
</dbReference>
<dbReference type="PRO" id="PR:Q499Z4"/>
<dbReference type="Proteomes" id="UP000005640">
    <property type="component" value="Chromosome 1"/>
</dbReference>
<dbReference type="RNAct" id="Q499Z4">
    <property type="molecule type" value="protein"/>
</dbReference>
<dbReference type="Bgee" id="ENSG00000171161">
    <property type="expression patterns" value="Expressed in hindlimb stylopod muscle and 190 other cell types or tissues"/>
</dbReference>
<dbReference type="ExpressionAtlas" id="Q499Z4">
    <property type="expression patterns" value="baseline and differential"/>
</dbReference>
<dbReference type="GO" id="GO:0005654">
    <property type="term" value="C:nucleoplasm"/>
    <property type="evidence" value="ECO:0000314"/>
    <property type="project" value="HPA"/>
</dbReference>
<dbReference type="GO" id="GO:0005634">
    <property type="term" value="C:nucleus"/>
    <property type="evidence" value="ECO:0000318"/>
    <property type="project" value="GO_Central"/>
</dbReference>
<dbReference type="GO" id="GO:0000981">
    <property type="term" value="F:DNA-binding transcription factor activity, RNA polymerase II-specific"/>
    <property type="evidence" value="ECO:0000318"/>
    <property type="project" value="GO_Central"/>
</dbReference>
<dbReference type="GO" id="GO:0043565">
    <property type="term" value="F:sequence-specific DNA binding"/>
    <property type="evidence" value="ECO:0000318"/>
    <property type="project" value="GO_Central"/>
</dbReference>
<dbReference type="GO" id="GO:0008270">
    <property type="term" value="F:zinc ion binding"/>
    <property type="evidence" value="ECO:0007669"/>
    <property type="project" value="UniProtKB-KW"/>
</dbReference>
<dbReference type="GO" id="GO:0006357">
    <property type="term" value="P:regulation of transcription by RNA polymerase II"/>
    <property type="evidence" value="ECO:0000318"/>
    <property type="project" value="GO_Central"/>
</dbReference>
<dbReference type="FunFam" id="3.30.160.60:FF:000557">
    <property type="entry name" value="zinc finger and SCAN domain-containing protein 29"/>
    <property type="match status" value="1"/>
</dbReference>
<dbReference type="FunFam" id="3.30.160.60:FF:000812">
    <property type="entry name" value="zinc finger protein 23 isoform X2"/>
    <property type="match status" value="1"/>
</dbReference>
<dbReference type="FunFam" id="3.30.160.60:FF:002343">
    <property type="entry name" value="Zinc finger protein 33A"/>
    <property type="match status" value="2"/>
</dbReference>
<dbReference type="FunFam" id="3.30.160.60:FF:000848">
    <property type="entry name" value="Zinc finger protein 35"/>
    <property type="match status" value="1"/>
</dbReference>
<dbReference type="FunFam" id="3.30.160.60:FF:001468">
    <property type="entry name" value="Zinc finger protein 672"/>
    <property type="match status" value="1"/>
</dbReference>
<dbReference type="FunFam" id="3.30.160.60:FF:002331">
    <property type="entry name" value="Zinc finger protein 672"/>
    <property type="match status" value="1"/>
</dbReference>
<dbReference type="FunFam" id="3.30.160.60:FF:003130">
    <property type="entry name" value="Zinc finger protein 672"/>
    <property type="match status" value="1"/>
</dbReference>
<dbReference type="FunFam" id="3.30.160.60:FF:000585">
    <property type="entry name" value="zinc finger protein 784"/>
    <property type="match status" value="1"/>
</dbReference>
<dbReference type="Gene3D" id="3.30.160.60">
    <property type="entry name" value="Classic Zinc Finger"/>
    <property type="match status" value="12"/>
</dbReference>
<dbReference type="InterPro" id="IPR036236">
    <property type="entry name" value="Znf_C2H2_sf"/>
</dbReference>
<dbReference type="InterPro" id="IPR013087">
    <property type="entry name" value="Znf_C2H2_type"/>
</dbReference>
<dbReference type="PANTHER" id="PTHR24393:SF163">
    <property type="entry name" value="GASTRULA ZINC FINGER PROTEIN XLCGF7.1-LIKE"/>
    <property type="match status" value="1"/>
</dbReference>
<dbReference type="PANTHER" id="PTHR24393">
    <property type="entry name" value="ZINC FINGER PROTEIN"/>
    <property type="match status" value="1"/>
</dbReference>
<dbReference type="Pfam" id="PF00096">
    <property type="entry name" value="zf-C2H2"/>
    <property type="match status" value="9"/>
</dbReference>
<dbReference type="Pfam" id="PF13894">
    <property type="entry name" value="zf-C2H2_4"/>
    <property type="match status" value="1"/>
</dbReference>
<dbReference type="SMART" id="SM00355">
    <property type="entry name" value="ZnF_C2H2"/>
    <property type="match status" value="14"/>
</dbReference>
<dbReference type="SUPFAM" id="SSF57667">
    <property type="entry name" value="beta-beta-alpha zinc fingers"/>
    <property type="match status" value="9"/>
</dbReference>
<dbReference type="PROSITE" id="PS00028">
    <property type="entry name" value="ZINC_FINGER_C2H2_1"/>
    <property type="match status" value="13"/>
</dbReference>
<dbReference type="PROSITE" id="PS50157">
    <property type="entry name" value="ZINC_FINGER_C2H2_2"/>
    <property type="match status" value="13"/>
</dbReference>
<evidence type="ECO:0000255" key="1">
    <source>
        <dbReference type="PROSITE-ProRule" id="PRU00042"/>
    </source>
</evidence>
<evidence type="ECO:0000305" key="2"/>
<evidence type="ECO:0000312" key="3">
    <source>
        <dbReference type="HGNC" id="HGNC:26179"/>
    </source>
</evidence>
<name>ZN672_HUMAN</name>
<comment type="function">
    <text>May be involved in transcriptional regulation.</text>
</comment>
<comment type="interaction">
    <interactant intactId="EBI-12146251">
        <id>Q499Z4</id>
    </interactant>
    <interactant intactId="EBI-12012928">
        <id>P60371</id>
        <label>KRTAP10-6</label>
    </interactant>
    <organismsDiffer>false</organismsDiffer>
    <experiments>3</experiments>
</comment>
<comment type="interaction">
    <interactant intactId="EBI-12146251">
        <id>Q499Z4</id>
    </interactant>
    <interactant intactId="EBI-14065470">
        <id>Q9BYR9</id>
        <label>KRTAP2-4</label>
    </interactant>
    <organismsDiffer>false</organismsDiffer>
    <experiments>3</experiments>
</comment>
<comment type="interaction">
    <interactant intactId="EBI-12146251">
        <id>Q499Z4</id>
    </interactant>
    <interactant intactId="EBI-22310682">
        <id>P0DPK4</id>
        <label>NOTCH2NLC</label>
    </interactant>
    <organismsDiffer>false</organismsDiffer>
    <experiments>3</experiments>
</comment>
<comment type="subcellular location">
    <subcellularLocation>
        <location evidence="2">Nucleus</location>
    </subcellularLocation>
</comment>
<comment type="similarity">
    <text evidence="2">Belongs to the krueppel C2H2-type zinc-finger protein family.</text>
</comment>
<comment type="sequence caution" evidence="2">
    <conflict type="miscellaneous discrepancy">
        <sequence resource="EMBL-CDS" id="AAH08872"/>
    </conflict>
    <text>Non-canonical splice intron-exon junction.</text>
</comment>
<protein>
    <recommendedName>
        <fullName evidence="2">Zinc finger protein 672</fullName>
    </recommendedName>
</protein>
<feature type="chain" id="PRO_0000233991" description="Zinc finger protein 672">
    <location>
        <begin position="1"/>
        <end position="452"/>
    </location>
</feature>
<feature type="zinc finger region" description="C2H2-type 1" evidence="1">
    <location>
        <begin position="14"/>
        <end position="36"/>
    </location>
</feature>
<feature type="zinc finger region" description="C2H2-type 2" evidence="1">
    <location>
        <begin position="42"/>
        <end position="64"/>
    </location>
</feature>
<feature type="zinc finger region" description="C2H2-type 3" evidence="1">
    <location>
        <begin position="70"/>
        <end position="92"/>
    </location>
</feature>
<feature type="zinc finger region" description="C2H2-type 4" evidence="1">
    <location>
        <begin position="99"/>
        <end position="122"/>
    </location>
</feature>
<feature type="zinc finger region" description="C2H2-type 5; degenerate" evidence="1">
    <location>
        <begin position="128"/>
        <end position="150"/>
    </location>
</feature>
<feature type="zinc finger region" description="C2H2-type 6" evidence="1">
    <location>
        <begin position="163"/>
        <end position="185"/>
    </location>
</feature>
<feature type="zinc finger region" description="C2H2-type 7" evidence="1">
    <location>
        <begin position="199"/>
        <end position="221"/>
    </location>
</feature>
<feature type="zinc finger region" description="C2H2-type 8" evidence="1">
    <location>
        <begin position="227"/>
        <end position="249"/>
    </location>
</feature>
<feature type="zinc finger region" description="C2H2-type 9" evidence="1">
    <location>
        <begin position="255"/>
        <end position="277"/>
    </location>
</feature>
<feature type="zinc finger region" description="C2H2-type 10" evidence="1">
    <location>
        <begin position="283"/>
        <end position="305"/>
    </location>
</feature>
<feature type="zinc finger region" description="C2H2-type 11" evidence="1">
    <location>
        <begin position="311"/>
        <end position="333"/>
    </location>
</feature>
<feature type="zinc finger region" description="C2H2-type 12" evidence="1">
    <location>
        <begin position="339"/>
        <end position="361"/>
    </location>
</feature>
<feature type="zinc finger region" description="C2H2-type 13" evidence="1">
    <location>
        <begin position="367"/>
        <end position="389"/>
    </location>
</feature>
<feature type="zinc finger region" description="C2H2-type 14" evidence="1">
    <location>
        <begin position="395"/>
        <end position="417"/>
    </location>
</feature>
<feature type="sequence conflict" description="In Ref. 2; AAH50348/AAH35140." evidence="2" ref="2">
    <original>A</original>
    <variation>P</variation>
    <location>
        <position position="182"/>
    </location>
</feature>